<reference key="1">
    <citation type="submission" date="2006-12" db="EMBL/GenBank/DDBJ databases">
        <title>Complete sequence of Shewanella sp. W3-18-1.</title>
        <authorList>
            <consortium name="US DOE Joint Genome Institute"/>
            <person name="Copeland A."/>
            <person name="Lucas S."/>
            <person name="Lapidus A."/>
            <person name="Barry K."/>
            <person name="Detter J.C."/>
            <person name="Glavina del Rio T."/>
            <person name="Hammon N."/>
            <person name="Israni S."/>
            <person name="Dalin E."/>
            <person name="Tice H."/>
            <person name="Pitluck S."/>
            <person name="Chain P."/>
            <person name="Malfatti S."/>
            <person name="Shin M."/>
            <person name="Vergez L."/>
            <person name="Schmutz J."/>
            <person name="Larimer F."/>
            <person name="Land M."/>
            <person name="Hauser L."/>
            <person name="Kyrpides N."/>
            <person name="Lykidis A."/>
            <person name="Tiedje J."/>
            <person name="Richardson P."/>
        </authorList>
    </citation>
    <scope>NUCLEOTIDE SEQUENCE [LARGE SCALE GENOMIC DNA]</scope>
    <source>
        <strain>W3-18-1</strain>
    </source>
</reference>
<accession>A1RQA8</accession>
<protein>
    <recommendedName>
        <fullName evidence="1">Bifunctional protein GlmU</fullName>
    </recommendedName>
    <domain>
        <recommendedName>
            <fullName evidence="1">UDP-N-acetylglucosamine pyrophosphorylase</fullName>
            <ecNumber evidence="1">2.7.7.23</ecNumber>
        </recommendedName>
        <alternativeName>
            <fullName evidence="1">N-acetylglucosamine-1-phosphate uridyltransferase</fullName>
        </alternativeName>
    </domain>
    <domain>
        <recommendedName>
            <fullName evidence="1">Glucosamine-1-phosphate N-acetyltransferase</fullName>
            <ecNumber evidence="1">2.3.1.157</ecNumber>
        </recommendedName>
    </domain>
</protein>
<feature type="chain" id="PRO_1000056200" description="Bifunctional protein GlmU">
    <location>
        <begin position="1"/>
        <end position="454"/>
    </location>
</feature>
<feature type="region of interest" description="Pyrophosphorylase" evidence="1">
    <location>
        <begin position="1"/>
        <end position="226"/>
    </location>
</feature>
<feature type="region of interest" description="Linker" evidence="1">
    <location>
        <begin position="227"/>
        <end position="247"/>
    </location>
</feature>
<feature type="region of interest" description="N-acetyltransferase" evidence="1">
    <location>
        <begin position="248"/>
        <end position="454"/>
    </location>
</feature>
<feature type="active site" description="Proton acceptor" evidence="1">
    <location>
        <position position="360"/>
    </location>
</feature>
<feature type="binding site" evidence="1">
    <location>
        <begin position="8"/>
        <end position="11"/>
    </location>
    <ligand>
        <name>UDP-N-acetyl-alpha-D-glucosamine</name>
        <dbReference type="ChEBI" id="CHEBI:57705"/>
    </ligand>
</feature>
<feature type="binding site" evidence="1">
    <location>
        <position position="22"/>
    </location>
    <ligand>
        <name>UDP-N-acetyl-alpha-D-glucosamine</name>
        <dbReference type="ChEBI" id="CHEBI:57705"/>
    </ligand>
</feature>
<feature type="binding site" evidence="1">
    <location>
        <position position="73"/>
    </location>
    <ligand>
        <name>UDP-N-acetyl-alpha-D-glucosamine</name>
        <dbReference type="ChEBI" id="CHEBI:57705"/>
    </ligand>
</feature>
<feature type="binding site" evidence="1">
    <location>
        <begin position="78"/>
        <end position="79"/>
    </location>
    <ligand>
        <name>UDP-N-acetyl-alpha-D-glucosamine</name>
        <dbReference type="ChEBI" id="CHEBI:57705"/>
    </ligand>
</feature>
<feature type="binding site" evidence="1">
    <location>
        <begin position="100"/>
        <end position="102"/>
    </location>
    <ligand>
        <name>UDP-N-acetyl-alpha-D-glucosamine</name>
        <dbReference type="ChEBI" id="CHEBI:57705"/>
    </ligand>
</feature>
<feature type="binding site" evidence="1">
    <location>
        <position position="102"/>
    </location>
    <ligand>
        <name>Mg(2+)</name>
        <dbReference type="ChEBI" id="CHEBI:18420"/>
    </ligand>
</feature>
<feature type="binding site" evidence="1">
    <location>
        <position position="137"/>
    </location>
    <ligand>
        <name>UDP-N-acetyl-alpha-D-glucosamine</name>
        <dbReference type="ChEBI" id="CHEBI:57705"/>
    </ligand>
</feature>
<feature type="binding site" evidence="1">
    <location>
        <position position="151"/>
    </location>
    <ligand>
        <name>UDP-N-acetyl-alpha-D-glucosamine</name>
        <dbReference type="ChEBI" id="CHEBI:57705"/>
    </ligand>
</feature>
<feature type="binding site" evidence="1">
    <location>
        <position position="166"/>
    </location>
    <ligand>
        <name>UDP-N-acetyl-alpha-D-glucosamine</name>
        <dbReference type="ChEBI" id="CHEBI:57705"/>
    </ligand>
</feature>
<feature type="binding site" evidence="1">
    <location>
        <position position="224"/>
    </location>
    <ligand>
        <name>Mg(2+)</name>
        <dbReference type="ChEBI" id="CHEBI:18420"/>
    </ligand>
</feature>
<feature type="binding site" evidence="1">
    <location>
        <position position="224"/>
    </location>
    <ligand>
        <name>UDP-N-acetyl-alpha-D-glucosamine</name>
        <dbReference type="ChEBI" id="CHEBI:57705"/>
    </ligand>
</feature>
<feature type="binding site" evidence="1">
    <location>
        <position position="330"/>
    </location>
    <ligand>
        <name>UDP-N-acetyl-alpha-D-glucosamine</name>
        <dbReference type="ChEBI" id="CHEBI:57705"/>
    </ligand>
</feature>
<feature type="binding site" evidence="1">
    <location>
        <position position="348"/>
    </location>
    <ligand>
        <name>UDP-N-acetyl-alpha-D-glucosamine</name>
        <dbReference type="ChEBI" id="CHEBI:57705"/>
    </ligand>
</feature>
<feature type="binding site" evidence="1">
    <location>
        <position position="363"/>
    </location>
    <ligand>
        <name>UDP-N-acetyl-alpha-D-glucosamine</name>
        <dbReference type="ChEBI" id="CHEBI:57705"/>
    </ligand>
</feature>
<feature type="binding site" evidence="1">
    <location>
        <position position="374"/>
    </location>
    <ligand>
        <name>UDP-N-acetyl-alpha-D-glucosamine</name>
        <dbReference type="ChEBI" id="CHEBI:57705"/>
    </ligand>
</feature>
<feature type="binding site" evidence="1">
    <location>
        <position position="377"/>
    </location>
    <ligand>
        <name>acetyl-CoA</name>
        <dbReference type="ChEBI" id="CHEBI:57288"/>
    </ligand>
</feature>
<feature type="binding site" evidence="1">
    <location>
        <begin position="383"/>
        <end position="384"/>
    </location>
    <ligand>
        <name>acetyl-CoA</name>
        <dbReference type="ChEBI" id="CHEBI:57288"/>
    </ligand>
</feature>
<feature type="binding site" evidence="1">
    <location>
        <position position="402"/>
    </location>
    <ligand>
        <name>acetyl-CoA</name>
        <dbReference type="ChEBI" id="CHEBI:57288"/>
    </ligand>
</feature>
<feature type="binding site" evidence="1">
    <location>
        <position position="420"/>
    </location>
    <ligand>
        <name>acetyl-CoA</name>
        <dbReference type="ChEBI" id="CHEBI:57288"/>
    </ligand>
</feature>
<feature type="binding site" evidence="1">
    <location>
        <position position="437"/>
    </location>
    <ligand>
        <name>acetyl-CoA</name>
        <dbReference type="ChEBI" id="CHEBI:57288"/>
    </ligand>
</feature>
<proteinExistence type="inferred from homology"/>
<keyword id="KW-0012">Acyltransferase</keyword>
<keyword id="KW-0133">Cell shape</keyword>
<keyword id="KW-0961">Cell wall biogenesis/degradation</keyword>
<keyword id="KW-0963">Cytoplasm</keyword>
<keyword id="KW-0460">Magnesium</keyword>
<keyword id="KW-0479">Metal-binding</keyword>
<keyword id="KW-0511">Multifunctional enzyme</keyword>
<keyword id="KW-0548">Nucleotidyltransferase</keyword>
<keyword id="KW-0573">Peptidoglycan synthesis</keyword>
<keyword id="KW-0677">Repeat</keyword>
<keyword id="KW-0808">Transferase</keyword>
<name>GLMU_SHESW</name>
<gene>
    <name evidence="1" type="primary">glmU</name>
    <name type="ordered locus">Sputw3181_4051</name>
</gene>
<dbReference type="EC" id="2.7.7.23" evidence="1"/>
<dbReference type="EC" id="2.3.1.157" evidence="1"/>
<dbReference type="EMBL" id="CP000503">
    <property type="protein sequence ID" value="ABM26853.1"/>
    <property type="molecule type" value="Genomic_DNA"/>
</dbReference>
<dbReference type="RefSeq" id="WP_011791274.1">
    <property type="nucleotide sequence ID" value="NC_008750.1"/>
</dbReference>
<dbReference type="SMR" id="A1RQA8"/>
<dbReference type="KEGG" id="shw:Sputw3181_4051"/>
<dbReference type="HOGENOM" id="CLU_029499_15_2_6"/>
<dbReference type="UniPathway" id="UPA00113">
    <property type="reaction ID" value="UER00532"/>
</dbReference>
<dbReference type="UniPathway" id="UPA00113">
    <property type="reaction ID" value="UER00533"/>
</dbReference>
<dbReference type="UniPathway" id="UPA00973"/>
<dbReference type="Proteomes" id="UP000002597">
    <property type="component" value="Chromosome"/>
</dbReference>
<dbReference type="GO" id="GO:0005737">
    <property type="term" value="C:cytoplasm"/>
    <property type="evidence" value="ECO:0007669"/>
    <property type="project" value="UniProtKB-SubCell"/>
</dbReference>
<dbReference type="GO" id="GO:0016020">
    <property type="term" value="C:membrane"/>
    <property type="evidence" value="ECO:0007669"/>
    <property type="project" value="GOC"/>
</dbReference>
<dbReference type="GO" id="GO:0019134">
    <property type="term" value="F:glucosamine-1-phosphate N-acetyltransferase activity"/>
    <property type="evidence" value="ECO:0007669"/>
    <property type="project" value="UniProtKB-UniRule"/>
</dbReference>
<dbReference type="GO" id="GO:0000287">
    <property type="term" value="F:magnesium ion binding"/>
    <property type="evidence" value="ECO:0007669"/>
    <property type="project" value="UniProtKB-UniRule"/>
</dbReference>
<dbReference type="GO" id="GO:0003977">
    <property type="term" value="F:UDP-N-acetylglucosamine diphosphorylase activity"/>
    <property type="evidence" value="ECO:0007669"/>
    <property type="project" value="UniProtKB-UniRule"/>
</dbReference>
<dbReference type="GO" id="GO:0000902">
    <property type="term" value="P:cell morphogenesis"/>
    <property type="evidence" value="ECO:0007669"/>
    <property type="project" value="UniProtKB-UniRule"/>
</dbReference>
<dbReference type="GO" id="GO:0071555">
    <property type="term" value="P:cell wall organization"/>
    <property type="evidence" value="ECO:0007669"/>
    <property type="project" value="UniProtKB-KW"/>
</dbReference>
<dbReference type="GO" id="GO:0009245">
    <property type="term" value="P:lipid A biosynthetic process"/>
    <property type="evidence" value="ECO:0007669"/>
    <property type="project" value="UniProtKB-UniRule"/>
</dbReference>
<dbReference type="GO" id="GO:0009252">
    <property type="term" value="P:peptidoglycan biosynthetic process"/>
    <property type="evidence" value="ECO:0007669"/>
    <property type="project" value="UniProtKB-UniRule"/>
</dbReference>
<dbReference type="GO" id="GO:0008360">
    <property type="term" value="P:regulation of cell shape"/>
    <property type="evidence" value="ECO:0007669"/>
    <property type="project" value="UniProtKB-KW"/>
</dbReference>
<dbReference type="GO" id="GO:0006048">
    <property type="term" value="P:UDP-N-acetylglucosamine biosynthetic process"/>
    <property type="evidence" value="ECO:0007669"/>
    <property type="project" value="UniProtKB-UniPathway"/>
</dbReference>
<dbReference type="CDD" id="cd02540">
    <property type="entry name" value="GT2_GlmU_N_bac"/>
    <property type="match status" value="1"/>
</dbReference>
<dbReference type="CDD" id="cd03353">
    <property type="entry name" value="LbH_GlmU_C"/>
    <property type="match status" value="1"/>
</dbReference>
<dbReference type="FunFam" id="3.90.550.10:FF:000006">
    <property type="entry name" value="Bifunctional protein GlmU"/>
    <property type="match status" value="1"/>
</dbReference>
<dbReference type="Gene3D" id="2.160.10.10">
    <property type="entry name" value="Hexapeptide repeat proteins"/>
    <property type="match status" value="1"/>
</dbReference>
<dbReference type="Gene3D" id="3.90.550.10">
    <property type="entry name" value="Spore Coat Polysaccharide Biosynthesis Protein SpsA, Chain A"/>
    <property type="match status" value="1"/>
</dbReference>
<dbReference type="HAMAP" id="MF_01631">
    <property type="entry name" value="GlmU"/>
    <property type="match status" value="1"/>
</dbReference>
<dbReference type="InterPro" id="IPR005882">
    <property type="entry name" value="Bifunctional_GlmU"/>
</dbReference>
<dbReference type="InterPro" id="IPR050065">
    <property type="entry name" value="GlmU-like"/>
</dbReference>
<dbReference type="InterPro" id="IPR038009">
    <property type="entry name" value="GlmU_C_LbH"/>
</dbReference>
<dbReference type="InterPro" id="IPR001451">
    <property type="entry name" value="Hexapep"/>
</dbReference>
<dbReference type="InterPro" id="IPR018357">
    <property type="entry name" value="Hexapep_transf_CS"/>
</dbReference>
<dbReference type="InterPro" id="IPR025877">
    <property type="entry name" value="MobA-like_NTP_Trfase"/>
</dbReference>
<dbReference type="InterPro" id="IPR029044">
    <property type="entry name" value="Nucleotide-diphossugar_trans"/>
</dbReference>
<dbReference type="InterPro" id="IPR011004">
    <property type="entry name" value="Trimer_LpxA-like_sf"/>
</dbReference>
<dbReference type="NCBIfam" id="TIGR01173">
    <property type="entry name" value="glmU"/>
    <property type="match status" value="1"/>
</dbReference>
<dbReference type="NCBIfam" id="NF006986">
    <property type="entry name" value="PRK09451.1"/>
    <property type="match status" value="1"/>
</dbReference>
<dbReference type="PANTHER" id="PTHR43584:SF3">
    <property type="entry name" value="BIFUNCTIONAL PROTEIN GLMU"/>
    <property type="match status" value="1"/>
</dbReference>
<dbReference type="PANTHER" id="PTHR43584">
    <property type="entry name" value="NUCLEOTIDYL TRANSFERASE"/>
    <property type="match status" value="1"/>
</dbReference>
<dbReference type="Pfam" id="PF00132">
    <property type="entry name" value="Hexapep"/>
    <property type="match status" value="2"/>
</dbReference>
<dbReference type="Pfam" id="PF12804">
    <property type="entry name" value="NTP_transf_3"/>
    <property type="match status" value="1"/>
</dbReference>
<dbReference type="SUPFAM" id="SSF53448">
    <property type="entry name" value="Nucleotide-diphospho-sugar transferases"/>
    <property type="match status" value="1"/>
</dbReference>
<dbReference type="SUPFAM" id="SSF51161">
    <property type="entry name" value="Trimeric LpxA-like enzymes"/>
    <property type="match status" value="1"/>
</dbReference>
<dbReference type="PROSITE" id="PS00101">
    <property type="entry name" value="HEXAPEP_TRANSFERASES"/>
    <property type="match status" value="1"/>
</dbReference>
<sequence>MALNVVILAAGKGTRMRSDLPKVLHPIAHKSMVQHVIDTAHSIGSDAIQLVYGYGADKLQASLGEQQLNWVLQAEQLGTGHAVAQASPYIADNDTVLILYGDVPLIQASTLEALLAARPENGVAILTVNLANPTGYGRIVREQGKVVGIIEQKDANPEQLLINEINTGIMAVPGKQLKTWLSRLSNNNAQGEYYLTDIIAMAHADGVAIDTAQPQSAIEVEGANNRVQLAQLERAYQAREAEKLMLAGANLRDPHRIDIRGEVTVGMDVMIDINVIFEGKVILGNNVTIGAGAILIDCEIADGAEIKPYSIIEGAKLGVAASAGPFARLRPGAELKQDAHIGNFVEVKKAIIGVGSKAGHLAYLGDAIIGDGVNIGAGTITCNYDGANKHLTVIEDNVFVGSDTQLVAPVTIGKGATLGAGSTITRDVGENELVITRVKQKHLLDWKRPVKIKK</sequence>
<comment type="function">
    <text evidence="1">Catalyzes the last two sequential reactions in the de novo biosynthetic pathway for UDP-N-acetylglucosamine (UDP-GlcNAc). The C-terminal domain catalyzes the transfer of acetyl group from acetyl coenzyme A to glucosamine-1-phosphate (GlcN-1-P) to produce N-acetylglucosamine-1-phosphate (GlcNAc-1-P), which is converted into UDP-GlcNAc by the transfer of uridine 5-monophosphate (from uridine 5-triphosphate), a reaction catalyzed by the N-terminal domain.</text>
</comment>
<comment type="catalytic activity">
    <reaction evidence="1">
        <text>alpha-D-glucosamine 1-phosphate + acetyl-CoA = N-acetyl-alpha-D-glucosamine 1-phosphate + CoA + H(+)</text>
        <dbReference type="Rhea" id="RHEA:13725"/>
        <dbReference type="ChEBI" id="CHEBI:15378"/>
        <dbReference type="ChEBI" id="CHEBI:57287"/>
        <dbReference type="ChEBI" id="CHEBI:57288"/>
        <dbReference type="ChEBI" id="CHEBI:57776"/>
        <dbReference type="ChEBI" id="CHEBI:58516"/>
        <dbReference type="EC" id="2.3.1.157"/>
    </reaction>
</comment>
<comment type="catalytic activity">
    <reaction evidence="1">
        <text>N-acetyl-alpha-D-glucosamine 1-phosphate + UTP + H(+) = UDP-N-acetyl-alpha-D-glucosamine + diphosphate</text>
        <dbReference type="Rhea" id="RHEA:13509"/>
        <dbReference type="ChEBI" id="CHEBI:15378"/>
        <dbReference type="ChEBI" id="CHEBI:33019"/>
        <dbReference type="ChEBI" id="CHEBI:46398"/>
        <dbReference type="ChEBI" id="CHEBI:57705"/>
        <dbReference type="ChEBI" id="CHEBI:57776"/>
        <dbReference type="EC" id="2.7.7.23"/>
    </reaction>
</comment>
<comment type="cofactor">
    <cofactor evidence="1">
        <name>Mg(2+)</name>
        <dbReference type="ChEBI" id="CHEBI:18420"/>
    </cofactor>
    <text evidence="1">Binds 1 Mg(2+) ion per subunit.</text>
</comment>
<comment type="pathway">
    <text evidence="1">Nucleotide-sugar biosynthesis; UDP-N-acetyl-alpha-D-glucosamine biosynthesis; N-acetyl-alpha-D-glucosamine 1-phosphate from alpha-D-glucosamine 6-phosphate (route II): step 2/2.</text>
</comment>
<comment type="pathway">
    <text evidence="1">Nucleotide-sugar biosynthesis; UDP-N-acetyl-alpha-D-glucosamine biosynthesis; UDP-N-acetyl-alpha-D-glucosamine from N-acetyl-alpha-D-glucosamine 1-phosphate: step 1/1.</text>
</comment>
<comment type="pathway">
    <text evidence="1">Bacterial outer membrane biogenesis; LPS lipid A biosynthesis.</text>
</comment>
<comment type="subunit">
    <text evidence="1">Homotrimer.</text>
</comment>
<comment type="subcellular location">
    <subcellularLocation>
        <location evidence="1">Cytoplasm</location>
    </subcellularLocation>
</comment>
<comment type="similarity">
    <text evidence="1">In the N-terminal section; belongs to the N-acetylglucosamine-1-phosphate uridyltransferase family.</text>
</comment>
<comment type="similarity">
    <text evidence="1">In the C-terminal section; belongs to the transferase hexapeptide repeat family.</text>
</comment>
<organism>
    <name type="scientific">Shewanella sp. (strain W3-18-1)</name>
    <dbReference type="NCBI Taxonomy" id="351745"/>
    <lineage>
        <taxon>Bacteria</taxon>
        <taxon>Pseudomonadati</taxon>
        <taxon>Pseudomonadota</taxon>
        <taxon>Gammaproteobacteria</taxon>
        <taxon>Alteromonadales</taxon>
        <taxon>Shewanellaceae</taxon>
        <taxon>Shewanella</taxon>
    </lineage>
</organism>
<evidence type="ECO:0000255" key="1">
    <source>
        <dbReference type="HAMAP-Rule" id="MF_01631"/>
    </source>
</evidence>